<comment type="function">
    <text evidence="1">Specifically methylates the pseudouridine at position 1915 (m3Psi1915) in 23S rRNA.</text>
</comment>
<comment type="catalytic activity">
    <reaction evidence="1">
        <text>pseudouridine(1915) in 23S rRNA + S-adenosyl-L-methionine = N(3)-methylpseudouridine(1915) in 23S rRNA + S-adenosyl-L-homocysteine + H(+)</text>
        <dbReference type="Rhea" id="RHEA:42752"/>
        <dbReference type="Rhea" id="RHEA-COMP:10221"/>
        <dbReference type="Rhea" id="RHEA-COMP:10222"/>
        <dbReference type="ChEBI" id="CHEBI:15378"/>
        <dbReference type="ChEBI" id="CHEBI:57856"/>
        <dbReference type="ChEBI" id="CHEBI:59789"/>
        <dbReference type="ChEBI" id="CHEBI:65314"/>
        <dbReference type="ChEBI" id="CHEBI:74486"/>
        <dbReference type="EC" id="2.1.1.177"/>
    </reaction>
</comment>
<comment type="subunit">
    <text evidence="1">Homodimer.</text>
</comment>
<comment type="subcellular location">
    <subcellularLocation>
        <location evidence="1">Cytoplasm</location>
    </subcellularLocation>
</comment>
<comment type="similarity">
    <text evidence="1">Belongs to the RNA methyltransferase RlmH family.</text>
</comment>
<feature type="chain" id="PRO_0000366671" description="Ribosomal RNA large subunit methyltransferase H">
    <location>
        <begin position="1"/>
        <end position="146"/>
    </location>
</feature>
<feature type="binding site" evidence="1">
    <location>
        <position position="68"/>
    </location>
    <ligand>
        <name>S-adenosyl-L-methionine</name>
        <dbReference type="ChEBI" id="CHEBI:59789"/>
    </ligand>
</feature>
<feature type="binding site" evidence="1">
    <location>
        <position position="95"/>
    </location>
    <ligand>
        <name>S-adenosyl-L-methionine</name>
        <dbReference type="ChEBI" id="CHEBI:59789"/>
    </ligand>
</feature>
<feature type="binding site" evidence="1">
    <location>
        <begin position="114"/>
        <end position="119"/>
    </location>
    <ligand>
        <name>S-adenosyl-L-methionine</name>
        <dbReference type="ChEBI" id="CHEBI:59789"/>
    </ligand>
</feature>
<protein>
    <recommendedName>
        <fullName evidence="1">Ribosomal RNA large subunit methyltransferase H</fullName>
        <ecNumber evidence="1">2.1.1.177</ecNumber>
    </recommendedName>
    <alternativeName>
        <fullName evidence="1">23S rRNA (pseudouridine1915-N3)-methyltransferase</fullName>
    </alternativeName>
    <alternativeName>
        <fullName evidence="1">23S rRNA m3Psi1915 methyltransferase</fullName>
    </alternativeName>
    <alternativeName>
        <fullName evidence="1">rRNA (pseudouridine-N3-)-methyltransferase RlmH</fullName>
    </alternativeName>
</protein>
<name>RLMH_THEYD</name>
<accession>B5YIF9</accession>
<reference key="1">
    <citation type="submission" date="2008-08" db="EMBL/GenBank/DDBJ databases">
        <title>The complete genome sequence of Thermodesulfovibrio yellowstonii strain ATCC 51303 / DSM 11347 / YP87.</title>
        <authorList>
            <person name="Dodson R.J."/>
            <person name="Durkin A.S."/>
            <person name="Wu M."/>
            <person name="Eisen J."/>
            <person name="Sutton G."/>
        </authorList>
    </citation>
    <scope>NUCLEOTIDE SEQUENCE [LARGE SCALE GENOMIC DNA]</scope>
    <source>
        <strain>ATCC 51303 / DSM 11347 / YP87</strain>
    </source>
</reference>
<organism>
    <name type="scientific">Thermodesulfovibrio yellowstonii (strain ATCC 51303 / DSM 11347 / YP87)</name>
    <dbReference type="NCBI Taxonomy" id="289376"/>
    <lineage>
        <taxon>Bacteria</taxon>
        <taxon>Pseudomonadati</taxon>
        <taxon>Nitrospirota</taxon>
        <taxon>Thermodesulfovibrionia</taxon>
        <taxon>Thermodesulfovibrionales</taxon>
        <taxon>Thermodesulfovibrionaceae</taxon>
        <taxon>Thermodesulfovibrio</taxon>
    </lineage>
</organism>
<keyword id="KW-0963">Cytoplasm</keyword>
<keyword id="KW-0489">Methyltransferase</keyword>
<keyword id="KW-1185">Reference proteome</keyword>
<keyword id="KW-0698">rRNA processing</keyword>
<keyword id="KW-0949">S-adenosyl-L-methionine</keyword>
<keyword id="KW-0808">Transferase</keyword>
<gene>
    <name evidence="1" type="primary">rlmH</name>
    <name type="ordered locus">THEYE_A2001</name>
</gene>
<proteinExistence type="inferred from homology"/>
<dbReference type="EC" id="2.1.1.177" evidence="1"/>
<dbReference type="EMBL" id="CP001147">
    <property type="protein sequence ID" value="ACI21850.1"/>
    <property type="molecule type" value="Genomic_DNA"/>
</dbReference>
<dbReference type="RefSeq" id="WP_012546553.1">
    <property type="nucleotide sequence ID" value="NC_011296.1"/>
</dbReference>
<dbReference type="RefSeq" id="YP_002249790.1">
    <property type="nucleotide sequence ID" value="NC_011296.1"/>
</dbReference>
<dbReference type="SMR" id="B5YIF9"/>
<dbReference type="FunCoup" id="B5YIF9">
    <property type="interactions" value="318"/>
</dbReference>
<dbReference type="STRING" id="289376.THEYE_A2001"/>
<dbReference type="EnsemblBacteria" id="ACI21850">
    <property type="protein sequence ID" value="ACI21850"/>
    <property type="gene ID" value="THEYE_A2001"/>
</dbReference>
<dbReference type="KEGG" id="tye:THEYE_A2001"/>
<dbReference type="PATRIC" id="fig|289376.4.peg.1955"/>
<dbReference type="eggNOG" id="COG1576">
    <property type="taxonomic scope" value="Bacteria"/>
</dbReference>
<dbReference type="HOGENOM" id="CLU_100552_2_0_0"/>
<dbReference type="InParanoid" id="B5YIF9"/>
<dbReference type="OrthoDB" id="9806643at2"/>
<dbReference type="Proteomes" id="UP000000718">
    <property type="component" value="Chromosome"/>
</dbReference>
<dbReference type="GO" id="GO:0005737">
    <property type="term" value="C:cytoplasm"/>
    <property type="evidence" value="ECO:0007669"/>
    <property type="project" value="UniProtKB-SubCell"/>
</dbReference>
<dbReference type="GO" id="GO:0070038">
    <property type="term" value="F:rRNA (pseudouridine-N3-)-methyltransferase activity"/>
    <property type="evidence" value="ECO:0007669"/>
    <property type="project" value="UniProtKB-UniRule"/>
</dbReference>
<dbReference type="CDD" id="cd18081">
    <property type="entry name" value="RlmH-like"/>
    <property type="match status" value="1"/>
</dbReference>
<dbReference type="Gene3D" id="3.40.1280.10">
    <property type="match status" value="1"/>
</dbReference>
<dbReference type="HAMAP" id="MF_00658">
    <property type="entry name" value="23SrRNA_methyltr_H"/>
    <property type="match status" value="1"/>
</dbReference>
<dbReference type="InterPro" id="IPR029028">
    <property type="entry name" value="Alpha/beta_knot_MTases"/>
</dbReference>
<dbReference type="InterPro" id="IPR003742">
    <property type="entry name" value="RlmH-like"/>
</dbReference>
<dbReference type="InterPro" id="IPR029026">
    <property type="entry name" value="tRNA_m1G_MTases_N"/>
</dbReference>
<dbReference type="PANTHER" id="PTHR33603">
    <property type="entry name" value="METHYLTRANSFERASE"/>
    <property type="match status" value="1"/>
</dbReference>
<dbReference type="PANTHER" id="PTHR33603:SF1">
    <property type="entry name" value="RIBOSOMAL RNA LARGE SUBUNIT METHYLTRANSFERASE H"/>
    <property type="match status" value="1"/>
</dbReference>
<dbReference type="Pfam" id="PF02590">
    <property type="entry name" value="SPOUT_MTase"/>
    <property type="match status" value="1"/>
</dbReference>
<dbReference type="PIRSF" id="PIRSF004505">
    <property type="entry name" value="MT_bac"/>
    <property type="match status" value="1"/>
</dbReference>
<dbReference type="SUPFAM" id="SSF75217">
    <property type="entry name" value="alpha/beta knot"/>
    <property type="match status" value="1"/>
</dbReference>
<sequence length="146" mass="16739">MYRFKIYYPGKTKAKFIKEGIDHYIKLLSPFAKVELIELKEGHGDKEKVTEEESKTILNSLKGDFILLHRDGKSLSSTEFADFIKDKSLTQFVIGGVYGVNEAVFKAASFRLSLSSLTFTHEISRLLLLEQLYRAITIIHGKSYHY</sequence>
<evidence type="ECO:0000255" key="1">
    <source>
        <dbReference type="HAMAP-Rule" id="MF_00658"/>
    </source>
</evidence>